<protein>
    <recommendedName>
        <fullName evidence="1">NADH-quinone oxidoreductase subunit N</fullName>
        <ecNumber evidence="1">7.1.1.-</ecNumber>
    </recommendedName>
    <alternativeName>
        <fullName evidence="1">NADH dehydrogenase I subunit N</fullName>
    </alternativeName>
    <alternativeName>
        <fullName evidence="1">NDH-1 subunit N</fullName>
    </alternativeName>
</protein>
<sequence>MTITPQNLIALLPLLIVGLTVVVVMLSIAWRRNHFLNATLSVIGLNAALVSLWFVGQAGAMDVTPLMRVDGFAMLYTGLVLLASLATCTFAYPWLEGYNDNKDEFYLLVLIAALGGILLANANHLASLFLGIELISLPLFGLVGYAFRQKRSLEASIKYTILSAAASSFLLFGMALVYAQSGDLSFVALGKNLGDGMLNEPLLLAGFGLMIVGLGFKLSLVPFHLWTPDVYQGAPAPVSTFLATASKIAIFGVVMRLFLYAPVGDSEAIRVVLAIIAFASIIFGNLMALSQTNIKRLLGYSSISHLGYLLVALIALQTGEMSMEAVGVYLAGYLFSSLGAFGVVSLMSSPYRGPDADSLFSYRGLFWHRPILAAVMTVMMLSLAGIPMTLGFIGKFYVLAVGVQAHLWWLVGAVVVGSAIGLYYYLRVAVSLYLHAPEQPGRDAPSNWQYSAGGIVVLISALLVLVLGVWPQPLISIVRLAMPLM</sequence>
<organism>
    <name type="scientific">Escherichia coli O9:H4 (strain HS)</name>
    <dbReference type="NCBI Taxonomy" id="331112"/>
    <lineage>
        <taxon>Bacteria</taxon>
        <taxon>Pseudomonadati</taxon>
        <taxon>Pseudomonadota</taxon>
        <taxon>Gammaproteobacteria</taxon>
        <taxon>Enterobacterales</taxon>
        <taxon>Enterobacteriaceae</taxon>
        <taxon>Escherichia</taxon>
    </lineage>
</organism>
<accession>A8A2E5</accession>
<reference key="1">
    <citation type="journal article" date="2008" name="J. Bacteriol.">
        <title>The pangenome structure of Escherichia coli: comparative genomic analysis of E. coli commensal and pathogenic isolates.</title>
        <authorList>
            <person name="Rasko D.A."/>
            <person name="Rosovitz M.J."/>
            <person name="Myers G.S.A."/>
            <person name="Mongodin E.F."/>
            <person name="Fricke W.F."/>
            <person name="Gajer P."/>
            <person name="Crabtree J."/>
            <person name="Sebaihia M."/>
            <person name="Thomson N.R."/>
            <person name="Chaudhuri R."/>
            <person name="Henderson I.R."/>
            <person name="Sperandio V."/>
            <person name="Ravel J."/>
        </authorList>
    </citation>
    <scope>NUCLEOTIDE SEQUENCE [LARGE SCALE GENOMIC DNA]</scope>
    <source>
        <strain>HS</strain>
    </source>
</reference>
<proteinExistence type="inferred from homology"/>
<dbReference type="EC" id="7.1.1.-" evidence="1"/>
<dbReference type="EMBL" id="CP000802">
    <property type="protein sequence ID" value="ABV06699.1"/>
    <property type="molecule type" value="Genomic_DNA"/>
</dbReference>
<dbReference type="RefSeq" id="WP_000156701.1">
    <property type="nucleotide sequence ID" value="NC_009800.1"/>
</dbReference>
<dbReference type="SMR" id="A8A2E5"/>
<dbReference type="GeneID" id="75205678"/>
<dbReference type="KEGG" id="ecx:EcHS_A2425"/>
<dbReference type="HOGENOM" id="CLU_007100_1_5_6"/>
<dbReference type="GO" id="GO:0005886">
    <property type="term" value="C:plasma membrane"/>
    <property type="evidence" value="ECO:0007669"/>
    <property type="project" value="UniProtKB-SubCell"/>
</dbReference>
<dbReference type="GO" id="GO:0008137">
    <property type="term" value="F:NADH dehydrogenase (ubiquinone) activity"/>
    <property type="evidence" value="ECO:0007669"/>
    <property type="project" value="InterPro"/>
</dbReference>
<dbReference type="GO" id="GO:0050136">
    <property type="term" value="F:NADH:ubiquinone reductase (non-electrogenic) activity"/>
    <property type="evidence" value="ECO:0007669"/>
    <property type="project" value="UniProtKB-UniRule"/>
</dbReference>
<dbReference type="GO" id="GO:0048038">
    <property type="term" value="F:quinone binding"/>
    <property type="evidence" value="ECO:0007669"/>
    <property type="project" value="UniProtKB-KW"/>
</dbReference>
<dbReference type="GO" id="GO:0042773">
    <property type="term" value="P:ATP synthesis coupled electron transport"/>
    <property type="evidence" value="ECO:0007669"/>
    <property type="project" value="InterPro"/>
</dbReference>
<dbReference type="HAMAP" id="MF_00445">
    <property type="entry name" value="NDH1_NuoN_1"/>
    <property type="match status" value="1"/>
</dbReference>
<dbReference type="InterPro" id="IPR010096">
    <property type="entry name" value="NADH-Q_OxRdtase_suN/2"/>
</dbReference>
<dbReference type="InterPro" id="IPR001750">
    <property type="entry name" value="ND/Mrp_TM"/>
</dbReference>
<dbReference type="NCBIfam" id="TIGR01770">
    <property type="entry name" value="NDH_I_N"/>
    <property type="match status" value="1"/>
</dbReference>
<dbReference type="NCBIfam" id="NF004439">
    <property type="entry name" value="PRK05777.1-1"/>
    <property type="match status" value="1"/>
</dbReference>
<dbReference type="PANTHER" id="PTHR22773">
    <property type="entry name" value="NADH DEHYDROGENASE"/>
    <property type="match status" value="1"/>
</dbReference>
<dbReference type="Pfam" id="PF00361">
    <property type="entry name" value="Proton_antipo_M"/>
    <property type="match status" value="1"/>
</dbReference>
<name>NUON_ECOHS</name>
<feature type="chain" id="PRO_1000068538" description="NADH-quinone oxidoreductase subunit N">
    <location>
        <begin position="1"/>
        <end position="485"/>
    </location>
</feature>
<feature type="transmembrane region" description="Helical" evidence="1">
    <location>
        <begin position="8"/>
        <end position="28"/>
    </location>
</feature>
<feature type="transmembrane region" description="Helical" evidence="1">
    <location>
        <begin position="35"/>
        <end position="55"/>
    </location>
</feature>
<feature type="transmembrane region" description="Helical" evidence="1">
    <location>
        <begin position="71"/>
        <end position="91"/>
    </location>
</feature>
<feature type="transmembrane region" description="Helical" evidence="1">
    <location>
        <begin position="105"/>
        <end position="125"/>
    </location>
</feature>
<feature type="transmembrane region" description="Helical" evidence="1">
    <location>
        <begin position="127"/>
        <end position="147"/>
    </location>
</feature>
<feature type="transmembrane region" description="Helical" evidence="1">
    <location>
        <begin position="159"/>
        <end position="179"/>
    </location>
</feature>
<feature type="transmembrane region" description="Helical" evidence="1">
    <location>
        <begin position="203"/>
        <end position="223"/>
    </location>
</feature>
<feature type="transmembrane region" description="Helical" evidence="1">
    <location>
        <begin position="235"/>
        <end position="255"/>
    </location>
</feature>
<feature type="transmembrane region" description="Helical" evidence="1">
    <location>
        <begin position="271"/>
        <end position="291"/>
    </location>
</feature>
<feature type="transmembrane region" description="Helical" evidence="1">
    <location>
        <begin position="297"/>
        <end position="317"/>
    </location>
</feature>
<feature type="transmembrane region" description="Helical" evidence="1">
    <location>
        <begin position="326"/>
        <end position="346"/>
    </location>
</feature>
<feature type="transmembrane region" description="Helical" evidence="1">
    <location>
        <begin position="373"/>
        <end position="393"/>
    </location>
</feature>
<feature type="transmembrane region" description="Helical" evidence="1">
    <location>
        <begin position="408"/>
        <end position="430"/>
    </location>
</feature>
<feature type="transmembrane region" description="Helical" evidence="1">
    <location>
        <begin position="455"/>
        <end position="475"/>
    </location>
</feature>
<evidence type="ECO:0000255" key="1">
    <source>
        <dbReference type="HAMAP-Rule" id="MF_00445"/>
    </source>
</evidence>
<comment type="function">
    <text evidence="1">NDH-1 shuttles electrons from NADH, via FMN and iron-sulfur (Fe-S) centers, to quinones in the respiratory chain. The immediate electron acceptor for the enzyme in this species is believed to be ubiquinone. Couples the redox reaction to proton translocation (for every two electrons transferred, four hydrogen ions are translocated across the cytoplasmic membrane), and thus conserves the redox energy in a proton gradient.</text>
</comment>
<comment type="catalytic activity">
    <reaction evidence="1">
        <text>a quinone + NADH + 5 H(+)(in) = a quinol + NAD(+) + 4 H(+)(out)</text>
        <dbReference type="Rhea" id="RHEA:57888"/>
        <dbReference type="ChEBI" id="CHEBI:15378"/>
        <dbReference type="ChEBI" id="CHEBI:24646"/>
        <dbReference type="ChEBI" id="CHEBI:57540"/>
        <dbReference type="ChEBI" id="CHEBI:57945"/>
        <dbReference type="ChEBI" id="CHEBI:132124"/>
    </reaction>
</comment>
<comment type="subunit">
    <text evidence="1">NDH-1 is composed of 13 different subunits. Subunits NuoA, H, J, K, L, M, N constitute the membrane sector of the complex.</text>
</comment>
<comment type="subcellular location">
    <subcellularLocation>
        <location evidence="1">Cell inner membrane</location>
        <topology evidence="1">Multi-pass membrane protein</topology>
    </subcellularLocation>
</comment>
<comment type="similarity">
    <text evidence="1">Belongs to the complex I subunit 2 family.</text>
</comment>
<keyword id="KW-0997">Cell inner membrane</keyword>
<keyword id="KW-1003">Cell membrane</keyword>
<keyword id="KW-0472">Membrane</keyword>
<keyword id="KW-0520">NAD</keyword>
<keyword id="KW-0874">Quinone</keyword>
<keyword id="KW-1278">Translocase</keyword>
<keyword id="KW-0812">Transmembrane</keyword>
<keyword id="KW-1133">Transmembrane helix</keyword>
<keyword id="KW-0813">Transport</keyword>
<keyword id="KW-0830">Ubiquinone</keyword>
<gene>
    <name evidence="1" type="primary">nuoN</name>
    <name type="ordered locus">EcHS_A2425</name>
</gene>